<comment type="function">
    <text evidence="1">Involved in urease metallocenter assembly. Binds nickel. Probably functions as a nickel donor during metallocenter assembly.</text>
</comment>
<comment type="subcellular location">
    <subcellularLocation>
        <location evidence="1">Cytoplasm</location>
    </subcellularLocation>
</comment>
<comment type="similarity">
    <text evidence="1">Belongs to the UreE family.</text>
</comment>
<comment type="caution">
    <text evidence="2">Neither O157 strain expresses urease due to a truncation of ureD, the last gene of the probable operon. Urease activity is restored in O157 / Sakai upon complementation with wild-type ureD.</text>
</comment>
<comment type="caution">
    <text evidence="2">This region of the chromosome is duplicated in strain O157:H7 / EDL933 but not in O157:H7 / Sakai.</text>
</comment>
<gene>
    <name evidence="1" type="primary">ureE1</name>
    <name type="ordered locus">Z1146</name>
    <name type="ordered locus">ECs1325</name>
</gene>
<gene>
    <name evidence="1" type="primary">ureE2</name>
    <name type="ordered locus">Z1585</name>
</gene>
<accession>Q8X9U6</accession>
<accession>Q7AFH4</accession>
<dbReference type="EMBL" id="AE005174">
    <property type="protein sequence ID" value="AAG55700.1"/>
    <property type="molecule type" value="Genomic_DNA"/>
</dbReference>
<dbReference type="EMBL" id="AE005174">
    <property type="protein sequence ID" value="AAG55291.1"/>
    <property type="molecule type" value="Genomic_DNA"/>
</dbReference>
<dbReference type="EMBL" id="BA000007">
    <property type="protein sequence ID" value="BAB34748.1"/>
    <property type="molecule type" value="Genomic_DNA"/>
</dbReference>
<dbReference type="PIR" id="E90794">
    <property type="entry name" value="E90794"/>
</dbReference>
<dbReference type="PIR" id="G85603">
    <property type="entry name" value="G85603"/>
</dbReference>
<dbReference type="SMR" id="Q8X9U6"/>
<dbReference type="STRING" id="155864.Z1146"/>
<dbReference type="KEGG" id="ece:Z1146"/>
<dbReference type="KEGG" id="ece:Z1585"/>
<dbReference type="KEGG" id="ecs:ECs_1325"/>
<dbReference type="PATRIC" id="fig|386585.9.peg.1430"/>
<dbReference type="eggNOG" id="COG2371">
    <property type="taxonomic scope" value="Bacteria"/>
</dbReference>
<dbReference type="HOGENOM" id="CLU_093757_2_0_6"/>
<dbReference type="OMA" id="QVFDEHH"/>
<dbReference type="Proteomes" id="UP000000558">
    <property type="component" value="Chromosome"/>
</dbReference>
<dbReference type="Proteomes" id="UP000002519">
    <property type="component" value="Chromosome"/>
</dbReference>
<dbReference type="GO" id="GO:0005737">
    <property type="term" value="C:cytoplasm"/>
    <property type="evidence" value="ECO:0007669"/>
    <property type="project" value="UniProtKB-SubCell"/>
</dbReference>
<dbReference type="GO" id="GO:0016151">
    <property type="term" value="F:nickel cation binding"/>
    <property type="evidence" value="ECO:0007669"/>
    <property type="project" value="UniProtKB-UniRule"/>
</dbReference>
<dbReference type="GO" id="GO:0051082">
    <property type="term" value="F:unfolded protein binding"/>
    <property type="evidence" value="ECO:0007669"/>
    <property type="project" value="UniProtKB-UniRule"/>
</dbReference>
<dbReference type="GO" id="GO:0006457">
    <property type="term" value="P:protein folding"/>
    <property type="evidence" value="ECO:0007669"/>
    <property type="project" value="InterPro"/>
</dbReference>
<dbReference type="GO" id="GO:0065003">
    <property type="term" value="P:protein-containing complex assembly"/>
    <property type="evidence" value="ECO:0007669"/>
    <property type="project" value="InterPro"/>
</dbReference>
<dbReference type="GO" id="GO:0019627">
    <property type="term" value="P:urea metabolic process"/>
    <property type="evidence" value="ECO:0007669"/>
    <property type="project" value="InterPro"/>
</dbReference>
<dbReference type="CDD" id="cd00571">
    <property type="entry name" value="UreE"/>
    <property type="match status" value="1"/>
</dbReference>
<dbReference type="Gene3D" id="2.60.260.20">
    <property type="entry name" value="Urease metallochaperone UreE, N-terminal domain"/>
    <property type="match status" value="1"/>
</dbReference>
<dbReference type="Gene3D" id="3.30.70.790">
    <property type="entry name" value="UreE, C-terminal domain"/>
    <property type="match status" value="1"/>
</dbReference>
<dbReference type="HAMAP" id="MF_00822">
    <property type="entry name" value="UreE"/>
    <property type="match status" value="1"/>
</dbReference>
<dbReference type="InterPro" id="IPR012406">
    <property type="entry name" value="UreE"/>
</dbReference>
<dbReference type="InterPro" id="IPR007864">
    <property type="entry name" value="UreE_C_dom"/>
</dbReference>
<dbReference type="InterPro" id="IPR004029">
    <property type="entry name" value="UreE_N"/>
</dbReference>
<dbReference type="InterPro" id="IPR036118">
    <property type="entry name" value="UreE_N_sf"/>
</dbReference>
<dbReference type="NCBIfam" id="NF009751">
    <property type="entry name" value="PRK13261.1-1"/>
    <property type="match status" value="1"/>
</dbReference>
<dbReference type="Pfam" id="PF05194">
    <property type="entry name" value="UreE_C"/>
    <property type="match status" value="1"/>
</dbReference>
<dbReference type="Pfam" id="PF02814">
    <property type="entry name" value="UreE_N"/>
    <property type="match status" value="1"/>
</dbReference>
<dbReference type="PIRSF" id="PIRSF036402">
    <property type="entry name" value="Ureas_acces_UreE"/>
    <property type="match status" value="1"/>
</dbReference>
<dbReference type="SMART" id="SM00988">
    <property type="entry name" value="UreE_N"/>
    <property type="match status" value="1"/>
</dbReference>
<dbReference type="SUPFAM" id="SSF69737">
    <property type="entry name" value="Urease metallochaperone UreE, C-terminal domain"/>
    <property type="match status" value="1"/>
</dbReference>
<dbReference type="SUPFAM" id="SSF69287">
    <property type="entry name" value="Urease metallochaperone UreE, N-terminal domain"/>
    <property type="match status" value="1"/>
</dbReference>
<proteinExistence type="inferred from homology"/>
<name>UREE_ECO57</name>
<feature type="chain" id="PRO_0000223414" description="Urease accessory protein UreE">
    <location>
        <begin position="1"/>
        <end position="154"/>
    </location>
</feature>
<reference key="1">
    <citation type="journal article" date="2001" name="Nature">
        <title>Genome sequence of enterohaemorrhagic Escherichia coli O157:H7.</title>
        <authorList>
            <person name="Perna N.T."/>
            <person name="Plunkett G. III"/>
            <person name="Burland V."/>
            <person name="Mau B."/>
            <person name="Glasner J.D."/>
            <person name="Rose D.J."/>
            <person name="Mayhew G.F."/>
            <person name="Evans P.S."/>
            <person name="Gregor J."/>
            <person name="Kirkpatrick H.A."/>
            <person name="Posfai G."/>
            <person name="Hackett J."/>
            <person name="Klink S."/>
            <person name="Boutin A."/>
            <person name="Shao Y."/>
            <person name="Miller L."/>
            <person name="Grotbeck E.J."/>
            <person name="Davis N.W."/>
            <person name="Lim A."/>
            <person name="Dimalanta E.T."/>
            <person name="Potamousis K."/>
            <person name="Apodaca J."/>
            <person name="Anantharaman T.S."/>
            <person name="Lin J."/>
            <person name="Yen G."/>
            <person name="Schwartz D.C."/>
            <person name="Welch R.A."/>
            <person name="Blattner F.R."/>
        </authorList>
    </citation>
    <scope>NUCLEOTIDE SEQUENCE [LARGE SCALE GENOMIC DNA]</scope>
    <source>
        <strain>O157:H7 / EDL933 / ATCC 700927 / EHEC</strain>
    </source>
</reference>
<reference key="2">
    <citation type="journal article" date="2001" name="DNA Res.">
        <title>Complete genome sequence of enterohemorrhagic Escherichia coli O157:H7 and genomic comparison with a laboratory strain K-12.</title>
        <authorList>
            <person name="Hayashi T."/>
            <person name="Makino K."/>
            <person name="Ohnishi M."/>
            <person name="Kurokawa K."/>
            <person name="Ishii K."/>
            <person name="Yokoyama K."/>
            <person name="Han C.-G."/>
            <person name="Ohtsubo E."/>
            <person name="Nakayama K."/>
            <person name="Murata T."/>
            <person name="Tanaka M."/>
            <person name="Tobe T."/>
            <person name="Iida T."/>
            <person name="Takami H."/>
            <person name="Honda T."/>
            <person name="Sasakawa C."/>
            <person name="Ogasawara N."/>
            <person name="Yasunaga T."/>
            <person name="Kuhara S."/>
            <person name="Shiba T."/>
            <person name="Hattori M."/>
            <person name="Shinagawa H."/>
        </authorList>
    </citation>
    <scope>NUCLEOTIDE SEQUENCE [LARGE SCALE GENOMIC DNA]</scope>
    <source>
        <strain>O157:H7 / Sakai / RIMD 0509952 / EHEC</strain>
    </source>
</reference>
<reference key="3">
    <citation type="journal article" date="2004" name="Microbiology">
        <title>Urease activity of enterohaemorrhagic Escherichia coli depends on a specific one-base substitution in ureD.</title>
        <authorList>
            <person name="Nakano M."/>
            <person name="Iida T."/>
            <person name="Honda T."/>
        </authorList>
    </citation>
    <scope>ABSENCE OF UREASE</scope>
    <source>
        <strain>O157:H7 / Sakai / RIMD 0509952 / EHEC</strain>
    </source>
</reference>
<keyword id="KW-0143">Chaperone</keyword>
<keyword id="KW-0963">Cytoplasm</keyword>
<keyword id="KW-0533">Nickel</keyword>
<keyword id="KW-0996">Nickel insertion</keyword>
<keyword id="KW-1185">Reference proteome</keyword>
<organism>
    <name type="scientific">Escherichia coli O157:H7</name>
    <dbReference type="NCBI Taxonomy" id="83334"/>
    <lineage>
        <taxon>Bacteria</taxon>
        <taxon>Pseudomonadati</taxon>
        <taxon>Pseudomonadota</taxon>
        <taxon>Gammaproteobacteria</taxon>
        <taxon>Enterobacterales</taxon>
        <taxon>Enterobacteriaceae</taxon>
        <taxon>Escherichia</taxon>
    </lineage>
</organism>
<sequence length="154" mass="17307">MLYLTRRVETPAQTTASVTLPVDMRVKSRIKVTLNDGRQAGLLLPRGLLLRDGDILSNENGDEFIKVIAADEAVSVVRCADPFMLAKACWHLGNRHVPLQIMPGELRYHHDHVLDDMLRQFGLDVDFAHLPFEPEAGAYASKSHAHNHDQEHSH</sequence>
<protein>
    <recommendedName>
        <fullName evidence="1">Urease accessory protein UreE</fullName>
    </recommendedName>
</protein>
<evidence type="ECO:0000255" key="1">
    <source>
        <dbReference type="HAMAP-Rule" id="MF_00822"/>
    </source>
</evidence>
<evidence type="ECO:0000305" key="2"/>